<proteinExistence type="inferred from homology"/>
<accession>B7N6Y1</accession>
<dbReference type="EC" id="2.7.7.4" evidence="2"/>
<dbReference type="EMBL" id="CU928163">
    <property type="protein sequence ID" value="CAR14242.1"/>
    <property type="molecule type" value="Genomic_DNA"/>
</dbReference>
<dbReference type="RefSeq" id="WP_001090392.1">
    <property type="nucleotide sequence ID" value="NC_011751.1"/>
</dbReference>
<dbReference type="RefSeq" id="YP_002413764.1">
    <property type="nucleotide sequence ID" value="NC_011751.1"/>
</dbReference>
<dbReference type="SMR" id="B7N6Y1"/>
<dbReference type="STRING" id="585056.ECUMN_3075"/>
<dbReference type="KEGG" id="eum:ECUMN_3075"/>
<dbReference type="PATRIC" id="fig|585056.7.peg.3251"/>
<dbReference type="HOGENOM" id="CLU_007265_5_2_6"/>
<dbReference type="UniPathway" id="UPA00140">
    <property type="reaction ID" value="UER00204"/>
</dbReference>
<dbReference type="Proteomes" id="UP000007097">
    <property type="component" value="Chromosome"/>
</dbReference>
<dbReference type="GO" id="GO:0005524">
    <property type="term" value="F:ATP binding"/>
    <property type="evidence" value="ECO:0007669"/>
    <property type="project" value="UniProtKB-KW"/>
</dbReference>
<dbReference type="GO" id="GO:0005525">
    <property type="term" value="F:GTP binding"/>
    <property type="evidence" value="ECO:0007669"/>
    <property type="project" value="UniProtKB-UniRule"/>
</dbReference>
<dbReference type="GO" id="GO:0003924">
    <property type="term" value="F:GTPase activity"/>
    <property type="evidence" value="ECO:0007669"/>
    <property type="project" value="InterPro"/>
</dbReference>
<dbReference type="GO" id="GO:0004781">
    <property type="term" value="F:sulfate adenylyltransferase (ATP) activity"/>
    <property type="evidence" value="ECO:0007669"/>
    <property type="project" value="UniProtKB-UniRule"/>
</dbReference>
<dbReference type="GO" id="GO:0070814">
    <property type="term" value="P:hydrogen sulfide biosynthetic process"/>
    <property type="evidence" value="ECO:0007669"/>
    <property type="project" value="UniProtKB-UniRule"/>
</dbReference>
<dbReference type="GO" id="GO:0000103">
    <property type="term" value="P:sulfate assimilation"/>
    <property type="evidence" value="ECO:0007669"/>
    <property type="project" value="UniProtKB-UniRule"/>
</dbReference>
<dbReference type="CDD" id="cd04166">
    <property type="entry name" value="CysN_ATPS"/>
    <property type="match status" value="1"/>
</dbReference>
<dbReference type="CDD" id="cd03695">
    <property type="entry name" value="CysN_NodQ_II"/>
    <property type="match status" value="1"/>
</dbReference>
<dbReference type="CDD" id="cd04095">
    <property type="entry name" value="CysN_NoDQ_III"/>
    <property type="match status" value="1"/>
</dbReference>
<dbReference type="FunFam" id="2.40.30.10:FF:000027">
    <property type="entry name" value="Sulfate adenylyltransferase subunit 1"/>
    <property type="match status" value="1"/>
</dbReference>
<dbReference type="FunFam" id="2.40.30.10:FF:000031">
    <property type="entry name" value="Sulfate adenylyltransferase subunit 1"/>
    <property type="match status" value="1"/>
</dbReference>
<dbReference type="FunFam" id="3.40.50.300:FF:000119">
    <property type="entry name" value="Sulfate adenylyltransferase subunit 1"/>
    <property type="match status" value="1"/>
</dbReference>
<dbReference type="Gene3D" id="3.40.50.300">
    <property type="entry name" value="P-loop containing nucleotide triphosphate hydrolases"/>
    <property type="match status" value="1"/>
</dbReference>
<dbReference type="Gene3D" id="2.40.30.10">
    <property type="entry name" value="Translation factors"/>
    <property type="match status" value="2"/>
</dbReference>
<dbReference type="HAMAP" id="MF_00062">
    <property type="entry name" value="Sulf_adenylyltr_sub1"/>
    <property type="match status" value="1"/>
</dbReference>
<dbReference type="InterPro" id="IPR041757">
    <property type="entry name" value="CysN_GTP-bd"/>
</dbReference>
<dbReference type="InterPro" id="IPR044138">
    <property type="entry name" value="CysN_II"/>
</dbReference>
<dbReference type="InterPro" id="IPR044139">
    <property type="entry name" value="CysN_NoDQ_III"/>
</dbReference>
<dbReference type="InterPro" id="IPR031157">
    <property type="entry name" value="G_TR_CS"/>
</dbReference>
<dbReference type="InterPro" id="IPR054696">
    <property type="entry name" value="GTP-eEF1A_C"/>
</dbReference>
<dbReference type="InterPro" id="IPR027417">
    <property type="entry name" value="P-loop_NTPase"/>
</dbReference>
<dbReference type="InterPro" id="IPR005225">
    <property type="entry name" value="Small_GTP-bd"/>
</dbReference>
<dbReference type="InterPro" id="IPR011779">
    <property type="entry name" value="SO4_adenylTrfase_lsu"/>
</dbReference>
<dbReference type="InterPro" id="IPR000795">
    <property type="entry name" value="T_Tr_GTP-bd_dom"/>
</dbReference>
<dbReference type="InterPro" id="IPR050100">
    <property type="entry name" value="TRAFAC_GTPase_members"/>
</dbReference>
<dbReference type="InterPro" id="IPR009000">
    <property type="entry name" value="Transl_B-barrel_sf"/>
</dbReference>
<dbReference type="InterPro" id="IPR009001">
    <property type="entry name" value="Transl_elong_EF1A/Init_IF2_C"/>
</dbReference>
<dbReference type="NCBIfam" id="TIGR02034">
    <property type="entry name" value="CysN"/>
    <property type="match status" value="1"/>
</dbReference>
<dbReference type="NCBIfam" id="NF003478">
    <property type="entry name" value="PRK05124.1"/>
    <property type="match status" value="1"/>
</dbReference>
<dbReference type="NCBIfam" id="TIGR00231">
    <property type="entry name" value="small_GTP"/>
    <property type="match status" value="1"/>
</dbReference>
<dbReference type="PANTHER" id="PTHR23115">
    <property type="entry name" value="TRANSLATION FACTOR"/>
    <property type="match status" value="1"/>
</dbReference>
<dbReference type="Pfam" id="PF22594">
    <property type="entry name" value="GTP-eEF1A_C"/>
    <property type="match status" value="1"/>
</dbReference>
<dbReference type="Pfam" id="PF00009">
    <property type="entry name" value="GTP_EFTU"/>
    <property type="match status" value="1"/>
</dbReference>
<dbReference type="PRINTS" id="PR00315">
    <property type="entry name" value="ELONGATNFCT"/>
</dbReference>
<dbReference type="SUPFAM" id="SSF50465">
    <property type="entry name" value="EF-Tu/eEF-1alpha/eIF2-gamma C-terminal domain"/>
    <property type="match status" value="1"/>
</dbReference>
<dbReference type="SUPFAM" id="SSF52540">
    <property type="entry name" value="P-loop containing nucleoside triphosphate hydrolases"/>
    <property type="match status" value="1"/>
</dbReference>
<dbReference type="SUPFAM" id="SSF50447">
    <property type="entry name" value="Translation proteins"/>
    <property type="match status" value="1"/>
</dbReference>
<dbReference type="PROSITE" id="PS00301">
    <property type="entry name" value="G_TR_1"/>
    <property type="match status" value="1"/>
</dbReference>
<dbReference type="PROSITE" id="PS51722">
    <property type="entry name" value="G_TR_2"/>
    <property type="match status" value="1"/>
</dbReference>
<comment type="function">
    <text evidence="2">With CysD forms the ATP sulfurylase (ATPS) that catalyzes the adenylation of sulfate producing adenosine 5'-phosphosulfate (APS) and diphosphate, the first enzymatic step in sulfur assimilation pathway. APS synthesis involves the formation of a high-energy phosphoric-sulfuric acid anhydride bond driven by GTP hydrolysis by CysN coupled to ATP hydrolysis by CysD.</text>
</comment>
<comment type="catalytic activity">
    <reaction evidence="2">
        <text>sulfate + ATP + H(+) = adenosine 5'-phosphosulfate + diphosphate</text>
        <dbReference type="Rhea" id="RHEA:18133"/>
        <dbReference type="ChEBI" id="CHEBI:15378"/>
        <dbReference type="ChEBI" id="CHEBI:16189"/>
        <dbReference type="ChEBI" id="CHEBI:30616"/>
        <dbReference type="ChEBI" id="CHEBI:33019"/>
        <dbReference type="ChEBI" id="CHEBI:58243"/>
        <dbReference type="EC" id="2.7.7.4"/>
    </reaction>
</comment>
<comment type="pathway">
    <text evidence="2">Sulfur metabolism; hydrogen sulfide biosynthesis; sulfite from sulfate: step 1/3.</text>
</comment>
<comment type="subunit">
    <text evidence="2">Heterodimer composed of CysD, the smaller subunit, and CysN.</text>
</comment>
<comment type="similarity">
    <text evidence="2">Belongs to the TRAFAC class translation factor GTPase superfamily. Classic translation factor GTPase family. CysN/NodQ subfamily.</text>
</comment>
<protein>
    <recommendedName>
        <fullName evidence="2">Sulfate adenylyltransferase subunit 1</fullName>
        <ecNumber evidence="2">2.7.7.4</ecNumber>
    </recommendedName>
    <alternativeName>
        <fullName evidence="2">ATP-sulfurylase large subunit</fullName>
    </alternativeName>
    <alternativeName>
        <fullName evidence="2">Sulfate adenylate transferase</fullName>
        <shortName evidence="2">SAT</shortName>
    </alternativeName>
</protein>
<organism>
    <name type="scientific">Escherichia coli O17:K52:H18 (strain UMN026 / ExPEC)</name>
    <dbReference type="NCBI Taxonomy" id="585056"/>
    <lineage>
        <taxon>Bacteria</taxon>
        <taxon>Pseudomonadati</taxon>
        <taxon>Pseudomonadota</taxon>
        <taxon>Gammaproteobacteria</taxon>
        <taxon>Enterobacterales</taxon>
        <taxon>Enterobacteriaceae</taxon>
        <taxon>Escherichia</taxon>
    </lineage>
</organism>
<evidence type="ECO:0000250" key="1"/>
<evidence type="ECO:0000255" key="2">
    <source>
        <dbReference type="HAMAP-Rule" id="MF_00062"/>
    </source>
</evidence>
<reference key="1">
    <citation type="journal article" date="2009" name="PLoS Genet.">
        <title>Organised genome dynamics in the Escherichia coli species results in highly diverse adaptive paths.</title>
        <authorList>
            <person name="Touchon M."/>
            <person name="Hoede C."/>
            <person name="Tenaillon O."/>
            <person name="Barbe V."/>
            <person name="Baeriswyl S."/>
            <person name="Bidet P."/>
            <person name="Bingen E."/>
            <person name="Bonacorsi S."/>
            <person name="Bouchier C."/>
            <person name="Bouvet O."/>
            <person name="Calteau A."/>
            <person name="Chiapello H."/>
            <person name="Clermont O."/>
            <person name="Cruveiller S."/>
            <person name="Danchin A."/>
            <person name="Diard M."/>
            <person name="Dossat C."/>
            <person name="Karoui M.E."/>
            <person name="Frapy E."/>
            <person name="Garry L."/>
            <person name="Ghigo J.M."/>
            <person name="Gilles A.M."/>
            <person name="Johnson J."/>
            <person name="Le Bouguenec C."/>
            <person name="Lescat M."/>
            <person name="Mangenot S."/>
            <person name="Martinez-Jehanne V."/>
            <person name="Matic I."/>
            <person name="Nassif X."/>
            <person name="Oztas S."/>
            <person name="Petit M.A."/>
            <person name="Pichon C."/>
            <person name="Rouy Z."/>
            <person name="Ruf C.S."/>
            <person name="Schneider D."/>
            <person name="Tourret J."/>
            <person name="Vacherie B."/>
            <person name="Vallenet D."/>
            <person name="Medigue C."/>
            <person name="Rocha E.P.C."/>
            <person name="Denamur E."/>
        </authorList>
    </citation>
    <scope>NUCLEOTIDE SEQUENCE [LARGE SCALE GENOMIC DNA]</scope>
    <source>
        <strain>UMN026 / ExPEC</strain>
    </source>
</reference>
<name>CYSN_ECOLU</name>
<sequence>MNTALAQQIANEGGVEAWMIAQQHKSLLRFLTCGSVDDGKSTLIGRLLHDTRQIYEDQLSSLHNDSKRHGTQGEKLDLALLVDGLQAEREQGITIDVAYRYFSTEKRKFIIADTPGHEQYTRNMATGASTCELAILLIDARKGVLDQTRRHSFISTLLGIKHLVVAINKMDLVGYSEETFTRIREDYLTFAGQLPGNLDIRFVPLSALEGDNVASQSESMPWYSGPTLLEVLETVEIQRVVDAQPMRFPVQYVNRPNLDFRGYAGTLASGRVEVGQRVKVLPSGVESNVARIVTFDGDREEAFAGEAITLVLTDEIDISRGDLLLAADEALPAVQSASVDVVWMAEQPLSAGQSYDIKIAGKKTRARVDGIRYQVDINNLTQREVENLPLNGIGLVDLTFDEPLVLDRYQQNPVTGGLIFIDRLSNVTVGAGMVHEPVSQATAAPSEFSAFELELNALVRRHFPHWGARDLLGDK</sequence>
<gene>
    <name evidence="2" type="primary">cysN</name>
    <name type="ordered locus">ECUMN_3075</name>
</gene>
<feature type="chain" id="PRO_1000116940" description="Sulfate adenylyltransferase subunit 1">
    <location>
        <begin position="1"/>
        <end position="475"/>
    </location>
</feature>
<feature type="domain" description="tr-type G">
    <location>
        <begin position="25"/>
        <end position="239"/>
    </location>
</feature>
<feature type="region of interest" description="G1" evidence="1">
    <location>
        <begin position="34"/>
        <end position="41"/>
    </location>
</feature>
<feature type="region of interest" description="G2" evidence="1">
    <location>
        <begin position="92"/>
        <end position="96"/>
    </location>
</feature>
<feature type="region of interest" description="G3" evidence="1">
    <location>
        <begin position="113"/>
        <end position="116"/>
    </location>
</feature>
<feature type="region of interest" description="G4" evidence="1">
    <location>
        <begin position="168"/>
        <end position="171"/>
    </location>
</feature>
<feature type="region of interest" description="G5" evidence="1">
    <location>
        <begin position="206"/>
        <end position="208"/>
    </location>
</feature>
<feature type="binding site" evidence="2">
    <location>
        <begin position="34"/>
        <end position="41"/>
    </location>
    <ligand>
        <name>GTP</name>
        <dbReference type="ChEBI" id="CHEBI:37565"/>
    </ligand>
</feature>
<feature type="binding site" evidence="2">
    <location>
        <begin position="113"/>
        <end position="117"/>
    </location>
    <ligand>
        <name>GTP</name>
        <dbReference type="ChEBI" id="CHEBI:37565"/>
    </ligand>
</feature>
<feature type="binding site" evidence="2">
    <location>
        <begin position="168"/>
        <end position="171"/>
    </location>
    <ligand>
        <name>GTP</name>
        <dbReference type="ChEBI" id="CHEBI:37565"/>
    </ligand>
</feature>
<keyword id="KW-0067">ATP-binding</keyword>
<keyword id="KW-0342">GTP-binding</keyword>
<keyword id="KW-0547">Nucleotide-binding</keyword>
<keyword id="KW-0548">Nucleotidyltransferase</keyword>
<keyword id="KW-0808">Transferase</keyword>